<name>RSEB_SALT1</name>
<proteinExistence type="inferred from homology"/>
<gene>
    <name type="primary">rseB</name>
    <name type="ordered locus">STM14_3232</name>
</gene>
<evidence type="ECO:0000250" key="1"/>
<evidence type="ECO:0000255" key="2"/>
<evidence type="ECO:0000269" key="3">
    <source>
    </source>
</evidence>
<evidence type="ECO:0000305" key="4"/>
<dbReference type="EMBL" id="CP001363">
    <property type="protein sequence ID" value="ACY89661.1"/>
    <property type="molecule type" value="Genomic_DNA"/>
</dbReference>
<dbReference type="RefSeq" id="WP_000812017.1">
    <property type="nucleotide sequence ID" value="NZ_CP043402.1"/>
</dbReference>
<dbReference type="SMR" id="D0ZSY7"/>
<dbReference type="KEGG" id="seo:STM14_3232"/>
<dbReference type="PATRIC" id="fig|588858.6.peg.2999"/>
<dbReference type="HOGENOM" id="CLU_054710_1_0_6"/>
<dbReference type="BioCyc" id="SENT588858:STM14_RS14445-MONOMER"/>
<dbReference type="Proteomes" id="UP000002695">
    <property type="component" value="Chromosome"/>
</dbReference>
<dbReference type="GO" id="GO:0030288">
    <property type="term" value="C:outer membrane-bounded periplasmic space"/>
    <property type="evidence" value="ECO:0007669"/>
    <property type="project" value="TreeGrafter"/>
</dbReference>
<dbReference type="GO" id="GO:0045152">
    <property type="term" value="F:antisigma factor binding"/>
    <property type="evidence" value="ECO:0007669"/>
    <property type="project" value="TreeGrafter"/>
</dbReference>
<dbReference type="GO" id="GO:0032885">
    <property type="term" value="P:regulation of polysaccharide biosynthetic process"/>
    <property type="evidence" value="ECO:0007669"/>
    <property type="project" value="TreeGrafter"/>
</dbReference>
<dbReference type="CDD" id="cd16327">
    <property type="entry name" value="RseB"/>
    <property type="match status" value="1"/>
</dbReference>
<dbReference type="FunFam" id="2.50.20.10:FF:000003">
    <property type="entry name" value="Sigma-E factor regulatory protein RseB"/>
    <property type="match status" value="1"/>
</dbReference>
<dbReference type="FunFam" id="3.30.200.100:FF:000001">
    <property type="entry name" value="Sigma-E factor regulatory protein RseB"/>
    <property type="match status" value="1"/>
</dbReference>
<dbReference type="Gene3D" id="2.50.20.10">
    <property type="entry name" value="Lipoprotein localisation LolA/LolB/LppX"/>
    <property type="match status" value="1"/>
</dbReference>
<dbReference type="Gene3D" id="3.30.200.100">
    <property type="entry name" value="MucB/RseB, C-terminal domain"/>
    <property type="match status" value="1"/>
</dbReference>
<dbReference type="InterPro" id="IPR033436">
    <property type="entry name" value="MucB/RseB_C"/>
</dbReference>
<dbReference type="InterPro" id="IPR038484">
    <property type="entry name" value="MucB/RseB_C_sf"/>
</dbReference>
<dbReference type="InterPro" id="IPR033434">
    <property type="entry name" value="MucB/RseB_N"/>
</dbReference>
<dbReference type="InterPro" id="IPR005588">
    <property type="entry name" value="MucB_RseB"/>
</dbReference>
<dbReference type="NCBIfam" id="NF006990">
    <property type="entry name" value="PRK09455.1"/>
    <property type="match status" value="1"/>
</dbReference>
<dbReference type="PANTHER" id="PTHR38782">
    <property type="match status" value="1"/>
</dbReference>
<dbReference type="PANTHER" id="PTHR38782:SF1">
    <property type="entry name" value="SIGMA-E FACTOR REGULATORY PROTEIN RSEB"/>
    <property type="match status" value="1"/>
</dbReference>
<dbReference type="Pfam" id="PF03888">
    <property type="entry name" value="MucB_RseB"/>
    <property type="match status" value="1"/>
</dbReference>
<dbReference type="Pfam" id="PF17188">
    <property type="entry name" value="MucB_RseB_C"/>
    <property type="match status" value="1"/>
</dbReference>
<dbReference type="PIRSF" id="PIRSF005427">
    <property type="entry name" value="RseB"/>
    <property type="match status" value="1"/>
</dbReference>
<protein>
    <recommendedName>
        <fullName>Sigma-E factor regulatory protein RseB</fullName>
    </recommendedName>
</protein>
<comment type="function">
    <text evidence="1">Negatively modulates the activity of sigma-E (RpoE) by stabilizing RseA under non-stress conditions. Although not essential for association of sigma-E with Rsea it increases their affinity 2- to 3-fold. When bound to RseA it prevents proteolysis by DegS, which is probably relieved by lipopolysaccharide binding (LPS) (By similarity).</text>
</comment>
<comment type="activity regulation">
    <text evidence="1">Binding to RseA is inhibited by LPS fragments; phosphorylated N-acetylglucosamine (GlcNAc) with N-linked acyl chains are minimally necessary to disrupt binding to RseA. Once RseB is no longer bound to RseA the latter is susceptible to DegS degradation. Thus if periplasmic LPS levels increase the sigma-E regulon is induced (By similarity).</text>
</comment>
<comment type="subunit">
    <text evidence="1">Homodimer. Interacts with RseA (By similarity).</text>
</comment>
<comment type="subcellular location">
    <subcellularLocation>
        <location evidence="1">Periplasm</location>
    </subcellularLocation>
    <text evidence="1">Partially associates with the inner membrane via RseA.</text>
</comment>
<comment type="disruption phenotype">
    <text evidence="3">Slight increase in basal sigma-E activity, retains acid stress induction of sigma-E.</text>
</comment>
<comment type="similarity">
    <text evidence="4">Belongs to the RseB family.</text>
</comment>
<organism>
    <name type="scientific">Salmonella typhimurium (strain 14028s / SGSC 2262)</name>
    <dbReference type="NCBI Taxonomy" id="588858"/>
    <lineage>
        <taxon>Bacteria</taxon>
        <taxon>Pseudomonadati</taxon>
        <taxon>Pseudomonadota</taxon>
        <taxon>Gammaproteobacteria</taxon>
        <taxon>Enterobacterales</taxon>
        <taxon>Enterobacteriaceae</taxon>
        <taxon>Salmonella</taxon>
    </lineage>
</organism>
<sequence length="318" mass="35768">MKQLWFAMSLVAASLFFSANASADPASGALLQQMNIASQSLNYELSFVSITKQGVESLRYRHARLDGRPLAQLLQLDGPRREVVQRGNEISYFEPGLEPFTLNGDYIVDSLPSLIYTDFKRLAPYYDFISVGRTRIADRLCEVIRVVARDGTRYSYIVWMDMDTKLPMRVDLLDRDGETLEQFRVIAFTVSQDIGSNMQALAKANLPPLLSVPGGEKTKFNWSPSWVPQGFSEVSSSRRPLPTMDNLPIESRLYSDGLFSFSVNVNRATQNSSDQMLRTGRRTVYSSVRDNAEITIVGELPPQTAKRIADSIKFRAVQ</sequence>
<feature type="signal peptide" evidence="2">
    <location>
        <begin position="1"/>
        <end position="23"/>
    </location>
</feature>
<feature type="chain" id="PRO_0000424885" description="Sigma-E factor regulatory protein RseB">
    <location>
        <begin position="24"/>
        <end position="318"/>
    </location>
</feature>
<keyword id="KW-0574">Periplasm</keyword>
<keyword id="KW-0732">Signal</keyword>
<reference key="1">
    <citation type="journal article" date="2010" name="J. Bacteriol.">
        <title>Short-term signatures of evolutionary change in the Salmonella enterica serovar typhimurium 14028 genome.</title>
        <authorList>
            <person name="Jarvik T."/>
            <person name="Smillie C."/>
            <person name="Groisman E.A."/>
            <person name="Ochman H."/>
        </authorList>
    </citation>
    <scope>NUCLEOTIDE SEQUENCE [LARGE SCALE GENOMIC DNA]</scope>
    <source>
        <strain>14028s / SGSC 2262</strain>
    </source>
</reference>
<reference key="2">
    <citation type="journal article" date="2009" name="Mol. Microbiol.">
        <title>Acid stress activation of the sigma(E) stress response in Salmonella enterica serovar Typhimurium.</title>
        <authorList>
            <person name="Muller C."/>
            <person name="Bang I.S."/>
            <person name="Velayudhan J."/>
            <person name="Karlinsey J."/>
            <person name="Papenfort K."/>
            <person name="Vogel J."/>
            <person name="Fang F.C."/>
        </authorList>
    </citation>
    <scope>DISRUPTION PHENOTYPE</scope>
    <source>
        <strain>14028s / SGSC 2262</strain>
    </source>
</reference>
<accession>D0ZSY7</accession>